<name>RL17_ANAMF</name>
<feature type="chain" id="PRO_1000183993" description="Large ribosomal subunit protein bL17">
    <location>
        <begin position="1"/>
        <end position="134"/>
    </location>
</feature>
<dbReference type="EMBL" id="CP001079">
    <property type="protein sequence ID" value="ACM49508.1"/>
    <property type="molecule type" value="Genomic_DNA"/>
</dbReference>
<dbReference type="RefSeq" id="WP_010268058.1">
    <property type="nucleotide sequence ID" value="NZ_AFMS01000136.1"/>
</dbReference>
<dbReference type="SMR" id="B9KJ46"/>
<dbReference type="STRING" id="320483.AMF_671"/>
<dbReference type="GeneID" id="7397854"/>
<dbReference type="KEGG" id="amf:AMF_671"/>
<dbReference type="PATRIC" id="fig|320483.3.peg.765"/>
<dbReference type="eggNOG" id="COG0203">
    <property type="taxonomic scope" value="Bacteria"/>
</dbReference>
<dbReference type="HOGENOM" id="CLU_074407_2_0_5"/>
<dbReference type="Proteomes" id="UP000007307">
    <property type="component" value="Chromosome"/>
</dbReference>
<dbReference type="GO" id="GO:0022625">
    <property type="term" value="C:cytosolic large ribosomal subunit"/>
    <property type="evidence" value="ECO:0007669"/>
    <property type="project" value="TreeGrafter"/>
</dbReference>
<dbReference type="GO" id="GO:0003735">
    <property type="term" value="F:structural constituent of ribosome"/>
    <property type="evidence" value="ECO:0007669"/>
    <property type="project" value="InterPro"/>
</dbReference>
<dbReference type="GO" id="GO:0006412">
    <property type="term" value="P:translation"/>
    <property type="evidence" value="ECO:0007669"/>
    <property type="project" value="UniProtKB-UniRule"/>
</dbReference>
<dbReference type="Gene3D" id="3.90.1030.10">
    <property type="entry name" value="Ribosomal protein L17"/>
    <property type="match status" value="1"/>
</dbReference>
<dbReference type="HAMAP" id="MF_01368">
    <property type="entry name" value="Ribosomal_bL17"/>
    <property type="match status" value="1"/>
</dbReference>
<dbReference type="InterPro" id="IPR000456">
    <property type="entry name" value="Ribosomal_bL17"/>
</dbReference>
<dbReference type="InterPro" id="IPR047859">
    <property type="entry name" value="Ribosomal_bL17_CS"/>
</dbReference>
<dbReference type="InterPro" id="IPR036373">
    <property type="entry name" value="Ribosomal_bL17_sf"/>
</dbReference>
<dbReference type="NCBIfam" id="TIGR00059">
    <property type="entry name" value="L17"/>
    <property type="match status" value="1"/>
</dbReference>
<dbReference type="PANTHER" id="PTHR14413:SF16">
    <property type="entry name" value="LARGE RIBOSOMAL SUBUNIT PROTEIN BL17M"/>
    <property type="match status" value="1"/>
</dbReference>
<dbReference type="PANTHER" id="PTHR14413">
    <property type="entry name" value="RIBOSOMAL PROTEIN L17"/>
    <property type="match status" value="1"/>
</dbReference>
<dbReference type="Pfam" id="PF01196">
    <property type="entry name" value="Ribosomal_L17"/>
    <property type="match status" value="1"/>
</dbReference>
<dbReference type="SUPFAM" id="SSF64263">
    <property type="entry name" value="Prokaryotic ribosomal protein L17"/>
    <property type="match status" value="1"/>
</dbReference>
<dbReference type="PROSITE" id="PS01167">
    <property type="entry name" value="RIBOSOMAL_L17"/>
    <property type="match status" value="1"/>
</dbReference>
<proteinExistence type="inferred from homology"/>
<protein>
    <recommendedName>
        <fullName evidence="1">Large ribosomal subunit protein bL17</fullName>
    </recommendedName>
    <alternativeName>
        <fullName evidence="2">50S ribosomal protein L17</fullName>
    </alternativeName>
</protein>
<organism>
    <name type="scientific">Anaplasma marginale (strain Florida)</name>
    <dbReference type="NCBI Taxonomy" id="320483"/>
    <lineage>
        <taxon>Bacteria</taxon>
        <taxon>Pseudomonadati</taxon>
        <taxon>Pseudomonadota</taxon>
        <taxon>Alphaproteobacteria</taxon>
        <taxon>Rickettsiales</taxon>
        <taxon>Anaplasmataceae</taxon>
        <taxon>Anaplasma</taxon>
    </lineage>
</organism>
<keyword id="KW-1185">Reference proteome</keyword>
<keyword id="KW-0687">Ribonucleoprotein</keyword>
<keyword id="KW-0689">Ribosomal protein</keyword>
<evidence type="ECO:0000255" key="1">
    <source>
        <dbReference type="HAMAP-Rule" id="MF_01368"/>
    </source>
</evidence>
<evidence type="ECO:0000305" key="2"/>
<sequence length="134" mass="15046">MRHGISCRKFSRPTAHRLSMLANLAVSLIRHERIVTTVAKAKDLRPFVERLVTVGRRLAKKDPVRGRRLLLSKMGGDLDAVNKLLDVLAKRYARRPGGYTRILKNGFRAGDCAPIAIMEFVDRKEGEPKKVAEG</sequence>
<accession>B9KJ46</accession>
<reference key="1">
    <citation type="journal article" date="2009" name="BMC Genomics">
        <title>Conservation in the face of diversity: multistrain analysis of an intracellular bacterium.</title>
        <authorList>
            <person name="Dark M.J."/>
            <person name="Herndon D.R."/>
            <person name="Kappmeyer L.S."/>
            <person name="Gonzales M.P."/>
            <person name="Nordeen E."/>
            <person name="Palmer G.H."/>
            <person name="Knowles D.P. Jr."/>
            <person name="Brayton K.A."/>
        </authorList>
    </citation>
    <scope>NUCLEOTIDE SEQUENCE [LARGE SCALE GENOMIC DNA]</scope>
    <source>
        <strain>Florida</strain>
    </source>
</reference>
<gene>
    <name evidence="1" type="primary">rplQ</name>
    <name type="ordered locus">AMF_671</name>
</gene>
<comment type="subunit">
    <text evidence="1">Part of the 50S ribosomal subunit. Contacts protein L32.</text>
</comment>
<comment type="similarity">
    <text evidence="1">Belongs to the bacterial ribosomal protein bL17 family.</text>
</comment>